<dbReference type="EC" id="2.7.1.31"/>
<dbReference type="EMBL" id="AB060262">
    <property type="protein sequence ID" value="BAB41180.1"/>
    <property type="molecule type" value="mRNA"/>
</dbReference>
<dbReference type="SMR" id="Q9BE01"/>
<dbReference type="STRING" id="9541.ENSMFAP00000020291"/>
<dbReference type="eggNOG" id="KOG3935">
    <property type="taxonomic scope" value="Eukaryota"/>
</dbReference>
<dbReference type="Proteomes" id="UP000233100">
    <property type="component" value="Unplaced"/>
</dbReference>
<dbReference type="GO" id="GO:0005737">
    <property type="term" value="C:cytoplasm"/>
    <property type="evidence" value="ECO:0000250"/>
    <property type="project" value="UniProtKB"/>
</dbReference>
<dbReference type="GO" id="GO:0005524">
    <property type="term" value="F:ATP binding"/>
    <property type="evidence" value="ECO:0007669"/>
    <property type="project" value="UniProtKB-KW"/>
</dbReference>
<dbReference type="GO" id="GO:0008887">
    <property type="term" value="F:glycerate kinase activity"/>
    <property type="evidence" value="ECO:0000250"/>
    <property type="project" value="UniProtKB"/>
</dbReference>
<dbReference type="GO" id="GO:0006468">
    <property type="term" value="P:protein phosphorylation"/>
    <property type="evidence" value="ECO:0000250"/>
    <property type="project" value="UniProtKB"/>
</dbReference>
<dbReference type="FunFam" id="3.40.50.10180:FF:000003">
    <property type="entry name" value="GLYCTK isoform 4"/>
    <property type="match status" value="1"/>
</dbReference>
<dbReference type="Gene3D" id="3.40.50.10180">
    <property type="entry name" value="Glycerate kinase, MOFRL-like N-terminal domain"/>
    <property type="match status" value="1"/>
</dbReference>
<dbReference type="Gene3D" id="3.40.1480.10">
    <property type="entry name" value="MOFRL domain"/>
    <property type="match status" value="1"/>
</dbReference>
<dbReference type="InterPro" id="IPR037035">
    <property type="entry name" value="GK-like_C_sf"/>
</dbReference>
<dbReference type="InterPro" id="IPR038614">
    <property type="entry name" value="GK_N_sf"/>
</dbReference>
<dbReference type="InterPro" id="IPR007835">
    <property type="entry name" value="MOFRL"/>
</dbReference>
<dbReference type="InterPro" id="IPR025286">
    <property type="entry name" value="MOFRL_assoc_dom"/>
</dbReference>
<dbReference type="InterPro" id="IPR039760">
    <property type="entry name" value="MOFRL_protein"/>
</dbReference>
<dbReference type="PANTHER" id="PTHR12227">
    <property type="entry name" value="GLYCERATE KINASE"/>
    <property type="match status" value="1"/>
</dbReference>
<dbReference type="PANTHER" id="PTHR12227:SF0">
    <property type="entry name" value="GLYCERATE KINASE"/>
    <property type="match status" value="1"/>
</dbReference>
<dbReference type="Pfam" id="PF13660">
    <property type="entry name" value="DUF4147"/>
    <property type="match status" value="1"/>
</dbReference>
<dbReference type="Pfam" id="PF05161">
    <property type="entry name" value="MOFRL"/>
    <property type="match status" value="1"/>
</dbReference>
<dbReference type="SUPFAM" id="SSF82544">
    <property type="entry name" value="GckA/TtuD-like"/>
    <property type="match status" value="1"/>
</dbReference>
<keyword id="KW-0067">ATP-binding</keyword>
<keyword id="KW-0963">Cytoplasm</keyword>
<keyword id="KW-0418">Kinase</keyword>
<keyword id="KW-0547">Nucleotide-binding</keyword>
<keyword id="KW-1185">Reference proteome</keyword>
<keyword id="KW-0808">Transferase</keyword>
<gene>
    <name type="primary">GLYCTK</name>
    <name type="ORF">QtrA-14732</name>
</gene>
<evidence type="ECO:0000250" key="1">
    <source>
        <dbReference type="UniProtKB" id="Q8IVS8"/>
    </source>
</evidence>
<evidence type="ECO:0000305" key="2"/>
<sequence length="396" mass="41710">MLLKPHSRVQVFEGAEDNLPDRDALRAALAIRQLAEGLTADDLLLVLISGGGSALLPAPIPPVTLEEKQTLTRLLAARGATIQELNTIRKALSQLKGGGLAQAAYPAQVVSLILSDVVGDPVEVIASGPTVASSHSVQDCLHILNRYGLRAALPRSVKTVLSRADSDPHGPRTCGHVLNVIIGSNVLALAEAQRQAEALGYQAVVLSAAMQGDVKSMAQFYGLLAHVARTRLTPSTAGASVEEDAQLHELAAELQIPDLQLEEALETMARGRGPVCLLAGGEPTVQLQGSGRGGRNQELALRVGAELRRWPLGQIDVLFLSGGTDGQDGPTEAAGAWVTPELASQAAAEGLDMATFLAHNDSHTFFCRLQGGAHLLHTGMTGTNVMDTHLLFLRPR</sequence>
<proteinExistence type="evidence at transcript level"/>
<accession>Q9BE01</accession>
<comment type="catalytic activity">
    <reaction evidence="1">
        <text>(R)-glycerate + ATP = (2R)-3-phosphoglycerate + ADP + H(+)</text>
        <dbReference type="Rhea" id="RHEA:23516"/>
        <dbReference type="ChEBI" id="CHEBI:15378"/>
        <dbReference type="ChEBI" id="CHEBI:16659"/>
        <dbReference type="ChEBI" id="CHEBI:30616"/>
        <dbReference type="ChEBI" id="CHEBI:58272"/>
        <dbReference type="ChEBI" id="CHEBI:456216"/>
        <dbReference type="EC" id="2.7.1.31"/>
    </reaction>
</comment>
<comment type="subcellular location">
    <subcellularLocation>
        <location evidence="1">Cytoplasm</location>
    </subcellularLocation>
</comment>
<comment type="similarity">
    <text evidence="2">Belongs to the glycerate kinase type-2 family.</text>
</comment>
<organism>
    <name type="scientific">Macaca fascicularis</name>
    <name type="common">Crab-eating macaque</name>
    <name type="synonym">Cynomolgus monkey</name>
    <dbReference type="NCBI Taxonomy" id="9541"/>
    <lineage>
        <taxon>Eukaryota</taxon>
        <taxon>Metazoa</taxon>
        <taxon>Chordata</taxon>
        <taxon>Craniata</taxon>
        <taxon>Vertebrata</taxon>
        <taxon>Euteleostomi</taxon>
        <taxon>Mammalia</taxon>
        <taxon>Eutheria</taxon>
        <taxon>Euarchontoglires</taxon>
        <taxon>Primates</taxon>
        <taxon>Haplorrhini</taxon>
        <taxon>Catarrhini</taxon>
        <taxon>Cercopithecidae</taxon>
        <taxon>Cercopithecinae</taxon>
        <taxon>Macaca</taxon>
    </lineage>
</organism>
<reference key="1">
    <citation type="journal article" date="2002" name="Genome Biol.">
        <title>Prediction of unidentified human genes on the basis of sequence similarity to novel cDNAs from cynomolgus monkey brain.</title>
        <authorList>
            <person name="Osada N."/>
            <person name="Hida M."/>
            <person name="Kusuda J."/>
            <person name="Tanuma R."/>
            <person name="Hirata M."/>
            <person name="Hirai M."/>
            <person name="Terao K."/>
            <person name="Suzuki Y."/>
            <person name="Sugano S."/>
            <person name="Hashimoto K."/>
        </authorList>
    </citation>
    <scope>NUCLEOTIDE SEQUENCE [LARGE SCALE MRNA]</scope>
    <source>
        <tissue>Temporal cortex</tissue>
    </source>
</reference>
<protein>
    <recommendedName>
        <fullName>Glycerate kinase</fullName>
        <ecNumber>2.7.1.31</ecNumber>
    </recommendedName>
</protein>
<feature type="chain" id="PRO_0000287193" description="Glycerate kinase">
    <location>
        <begin position="1"/>
        <end position="396"/>
    </location>
</feature>
<name>GLCTK_MACFA</name>